<name>RPOC_THEYD</name>
<feature type="chain" id="PRO_1000141797" description="DNA-directed RNA polymerase subunit beta'">
    <location>
        <begin position="1"/>
        <end position="1371"/>
    </location>
</feature>
<feature type="binding site" evidence="1">
    <location>
        <position position="71"/>
    </location>
    <ligand>
        <name>Zn(2+)</name>
        <dbReference type="ChEBI" id="CHEBI:29105"/>
        <label>1</label>
    </ligand>
</feature>
<feature type="binding site" evidence="1">
    <location>
        <position position="73"/>
    </location>
    <ligand>
        <name>Zn(2+)</name>
        <dbReference type="ChEBI" id="CHEBI:29105"/>
        <label>1</label>
    </ligand>
</feature>
<feature type="binding site" evidence="1">
    <location>
        <position position="86"/>
    </location>
    <ligand>
        <name>Zn(2+)</name>
        <dbReference type="ChEBI" id="CHEBI:29105"/>
        <label>1</label>
    </ligand>
</feature>
<feature type="binding site" evidence="1">
    <location>
        <position position="89"/>
    </location>
    <ligand>
        <name>Zn(2+)</name>
        <dbReference type="ChEBI" id="CHEBI:29105"/>
        <label>1</label>
    </ligand>
</feature>
<feature type="binding site" evidence="1">
    <location>
        <position position="461"/>
    </location>
    <ligand>
        <name>Mg(2+)</name>
        <dbReference type="ChEBI" id="CHEBI:18420"/>
    </ligand>
</feature>
<feature type="binding site" evidence="1">
    <location>
        <position position="463"/>
    </location>
    <ligand>
        <name>Mg(2+)</name>
        <dbReference type="ChEBI" id="CHEBI:18420"/>
    </ligand>
</feature>
<feature type="binding site" evidence="1">
    <location>
        <position position="465"/>
    </location>
    <ligand>
        <name>Mg(2+)</name>
        <dbReference type="ChEBI" id="CHEBI:18420"/>
    </ligand>
</feature>
<feature type="binding site" evidence="1">
    <location>
        <position position="803"/>
    </location>
    <ligand>
        <name>Zn(2+)</name>
        <dbReference type="ChEBI" id="CHEBI:29105"/>
        <label>2</label>
    </ligand>
</feature>
<feature type="binding site" evidence="1">
    <location>
        <position position="877"/>
    </location>
    <ligand>
        <name>Zn(2+)</name>
        <dbReference type="ChEBI" id="CHEBI:29105"/>
        <label>2</label>
    </ligand>
</feature>
<feature type="binding site" evidence="1">
    <location>
        <position position="884"/>
    </location>
    <ligand>
        <name>Zn(2+)</name>
        <dbReference type="ChEBI" id="CHEBI:29105"/>
        <label>2</label>
    </ligand>
</feature>
<feature type="binding site" evidence="1">
    <location>
        <position position="887"/>
    </location>
    <ligand>
        <name>Zn(2+)</name>
        <dbReference type="ChEBI" id="CHEBI:29105"/>
        <label>2</label>
    </ligand>
</feature>
<evidence type="ECO:0000255" key="1">
    <source>
        <dbReference type="HAMAP-Rule" id="MF_01322"/>
    </source>
</evidence>
<keyword id="KW-0240">DNA-directed RNA polymerase</keyword>
<keyword id="KW-0460">Magnesium</keyword>
<keyword id="KW-0479">Metal-binding</keyword>
<keyword id="KW-0548">Nucleotidyltransferase</keyword>
<keyword id="KW-1185">Reference proteome</keyword>
<keyword id="KW-0804">Transcription</keyword>
<keyword id="KW-0808">Transferase</keyword>
<keyword id="KW-0862">Zinc</keyword>
<organism>
    <name type="scientific">Thermodesulfovibrio yellowstonii (strain ATCC 51303 / DSM 11347 / YP87)</name>
    <dbReference type="NCBI Taxonomy" id="289376"/>
    <lineage>
        <taxon>Bacteria</taxon>
        <taxon>Pseudomonadati</taxon>
        <taxon>Nitrospirota</taxon>
        <taxon>Thermodesulfovibrionia</taxon>
        <taxon>Thermodesulfovibrionales</taxon>
        <taxon>Thermodesulfovibrionaceae</taxon>
        <taxon>Thermodesulfovibrio</taxon>
    </lineage>
</organism>
<sequence>MTEDIYSLFQKPKNPRDFDAIRIKLASPEKIREWSYGEVKKPETINYRTFKPEPEGLFCAKIFGPIKDWECLCGKYKRMKHKGVICDKCGVEVIQSKVRRERMGHIELAAPVAHIWFVRGVPSKMGLLLDLSVRQLERVIYYEDYIVIDPGDTPLKEKDILTEDEYKKCISQYGNKFKAGMGAEAVRELLKKIDLDIVAQELKEKIEAATSTGIKRKLTKRLKVIEAFKNSGNRPEWMILDIVPVLPPELRPLVPLDGGRFASSDLNDLYRRVINRNNRLKRLMELKAPSVIIRNEKRMLQESVDTLFDNTKRSKALKAGTRRPLKSLSDMIKGKQGRFRQNLLGKRVDYSGRSVIVVGPELDMHQCGLPKSMALELFKPFVFNKLEEKGYATTIKQAKRLVEQERSEVWDALEEVIQEHPVLLNRAPTLHRLGIQAFDPVLVEGKAIKLHPLVCTAFNADFDGDQMAVHVPLSYEAQVEARVLMMSVGNLLSPANGKPIVVPTQDMVLGIYYLTKEKHDAKGAGKVFSDPEEVILAYQCKAVEKHAPIKVKLNGEFVNTTVGRILFREIVPEGVPFQMINKELTKKELGKLIEYIHYNFGKRDTVLFLNKLEKLGFEVATQSGISICIDDMHIPSKKTELIKEAEAQVMEVQRQYAEGLITQGERYNKVIDIWANVTERVADEMMKELGAERGKEFTPEELAERRSFNSIFMMADSGARGSIAQIRQLAGMRGLMAKPSGEIIETPITANFREGLTPLQYFISTHGARKGLADTALKTANAGYLTRRLVDVAQDIFLIEHDCGTKDGIYITALIEGGEIVMPLEERIYGRTLAEDIKDPLTGEIIAKRDTVIDQALAKKIVDSGIDRLKIRSVLTCRTKFGVCSKCYGMDLARSEPVEIGEAIGVIAAQSIGEPGTQLTMRTFHIGGAATKIVEQAVLEAKGSGTVRFKNIHYVERKDGSLVVLNRNAMIVITDSSGREREKYNLVYGAKIIVKEGQIVESGQRLAEWDAYTTPIITEIGGKIALGDMVEGVTFKEETDPTTGLSHKIIIDYPATYRPRVTIKDKDGKTAKLPSGTAARYLLPAGAILVVDKGDIVEPGDILAKIPRETIKTKDITGGLPRVAELFEARRPREAAIVSEIDGIVEFKGSQKGSRVIVVRGADETREYLIPKGKHVIVHDGDWVKAGEPLIDGSINPHSILEILGPTELQRYLVDEIQKVYRLQGVSIHDKHIEVIVRQMMKKVRIEDPGDTSFLIGDEVDRFIFIEENEKVIARGGRPAQARPLLLGITKAALSTESWVSAASFQETTRVLTDAAIEARIDELRGLKENVIMGRIIPAGTGSPVYKDTLIKGEFYSMQIEHFSEESIEEN</sequence>
<accession>B5YFV7</accession>
<gene>
    <name evidence="1" type="primary">rpoC</name>
    <name type="ordered locus">THEYE_A1346</name>
</gene>
<reference key="1">
    <citation type="submission" date="2008-08" db="EMBL/GenBank/DDBJ databases">
        <title>The complete genome sequence of Thermodesulfovibrio yellowstonii strain ATCC 51303 / DSM 11347 / YP87.</title>
        <authorList>
            <person name="Dodson R.J."/>
            <person name="Durkin A.S."/>
            <person name="Wu M."/>
            <person name="Eisen J."/>
            <person name="Sutton G."/>
        </authorList>
    </citation>
    <scope>NUCLEOTIDE SEQUENCE [LARGE SCALE GENOMIC DNA]</scope>
    <source>
        <strain>ATCC 51303 / DSM 11347 / YP87</strain>
    </source>
</reference>
<dbReference type="EC" id="2.7.7.6" evidence="1"/>
<dbReference type="EMBL" id="CP001147">
    <property type="protein sequence ID" value="ACI21535.1"/>
    <property type="molecule type" value="Genomic_DNA"/>
</dbReference>
<dbReference type="RefSeq" id="WP_012546248.1">
    <property type="nucleotide sequence ID" value="NC_011296.1"/>
</dbReference>
<dbReference type="RefSeq" id="YP_002249155.1">
    <property type="nucleotide sequence ID" value="NC_011296.1"/>
</dbReference>
<dbReference type="SMR" id="B5YFV7"/>
<dbReference type="FunCoup" id="B5YFV7">
    <property type="interactions" value="445"/>
</dbReference>
<dbReference type="STRING" id="289376.THEYE_A1346"/>
<dbReference type="EnsemblBacteria" id="ACI21535">
    <property type="protein sequence ID" value="ACI21535"/>
    <property type="gene ID" value="THEYE_A1346"/>
</dbReference>
<dbReference type="KEGG" id="tye:THEYE_A1346"/>
<dbReference type="PATRIC" id="fig|289376.4.peg.1312"/>
<dbReference type="eggNOG" id="COG0086">
    <property type="taxonomic scope" value="Bacteria"/>
</dbReference>
<dbReference type="HOGENOM" id="CLU_000524_3_1_0"/>
<dbReference type="InParanoid" id="B5YFV7"/>
<dbReference type="OrthoDB" id="9815296at2"/>
<dbReference type="Proteomes" id="UP000000718">
    <property type="component" value="Chromosome"/>
</dbReference>
<dbReference type="GO" id="GO:0000428">
    <property type="term" value="C:DNA-directed RNA polymerase complex"/>
    <property type="evidence" value="ECO:0007669"/>
    <property type="project" value="UniProtKB-KW"/>
</dbReference>
<dbReference type="GO" id="GO:0003677">
    <property type="term" value="F:DNA binding"/>
    <property type="evidence" value="ECO:0007669"/>
    <property type="project" value="UniProtKB-UniRule"/>
</dbReference>
<dbReference type="GO" id="GO:0003899">
    <property type="term" value="F:DNA-directed RNA polymerase activity"/>
    <property type="evidence" value="ECO:0007669"/>
    <property type="project" value="UniProtKB-UniRule"/>
</dbReference>
<dbReference type="GO" id="GO:0000287">
    <property type="term" value="F:magnesium ion binding"/>
    <property type="evidence" value="ECO:0007669"/>
    <property type="project" value="UniProtKB-UniRule"/>
</dbReference>
<dbReference type="GO" id="GO:0008270">
    <property type="term" value="F:zinc ion binding"/>
    <property type="evidence" value="ECO:0007669"/>
    <property type="project" value="UniProtKB-UniRule"/>
</dbReference>
<dbReference type="GO" id="GO:0006351">
    <property type="term" value="P:DNA-templated transcription"/>
    <property type="evidence" value="ECO:0007669"/>
    <property type="project" value="UniProtKB-UniRule"/>
</dbReference>
<dbReference type="CDD" id="cd02655">
    <property type="entry name" value="RNAP_beta'_C"/>
    <property type="match status" value="1"/>
</dbReference>
<dbReference type="CDD" id="cd01609">
    <property type="entry name" value="RNAP_beta'_N"/>
    <property type="match status" value="1"/>
</dbReference>
<dbReference type="FunFam" id="1.10.132.30:FF:000003">
    <property type="entry name" value="DNA-directed RNA polymerase subunit beta"/>
    <property type="match status" value="1"/>
</dbReference>
<dbReference type="Gene3D" id="1.10.132.30">
    <property type="match status" value="1"/>
</dbReference>
<dbReference type="Gene3D" id="1.10.150.390">
    <property type="match status" value="1"/>
</dbReference>
<dbReference type="Gene3D" id="1.10.1790.20">
    <property type="match status" value="1"/>
</dbReference>
<dbReference type="Gene3D" id="1.10.40.90">
    <property type="match status" value="1"/>
</dbReference>
<dbReference type="Gene3D" id="2.40.40.20">
    <property type="match status" value="1"/>
</dbReference>
<dbReference type="Gene3D" id="2.40.50.100">
    <property type="match status" value="3"/>
</dbReference>
<dbReference type="Gene3D" id="4.10.860.120">
    <property type="entry name" value="RNA polymerase II, clamp domain"/>
    <property type="match status" value="1"/>
</dbReference>
<dbReference type="Gene3D" id="1.10.274.100">
    <property type="entry name" value="RNA polymerase Rpb1, domain 3"/>
    <property type="match status" value="2"/>
</dbReference>
<dbReference type="HAMAP" id="MF_01322">
    <property type="entry name" value="RNApol_bact_RpoC"/>
    <property type="match status" value="1"/>
</dbReference>
<dbReference type="InterPro" id="IPR045867">
    <property type="entry name" value="DNA-dir_RpoC_beta_prime"/>
</dbReference>
<dbReference type="InterPro" id="IPR012754">
    <property type="entry name" value="DNA-dir_RpoC_beta_prime_bact"/>
</dbReference>
<dbReference type="InterPro" id="IPR000722">
    <property type="entry name" value="RNA_pol_asu"/>
</dbReference>
<dbReference type="InterPro" id="IPR006592">
    <property type="entry name" value="RNA_pol_N"/>
</dbReference>
<dbReference type="InterPro" id="IPR007080">
    <property type="entry name" value="RNA_pol_Rpb1_1"/>
</dbReference>
<dbReference type="InterPro" id="IPR007066">
    <property type="entry name" value="RNA_pol_Rpb1_3"/>
</dbReference>
<dbReference type="InterPro" id="IPR042102">
    <property type="entry name" value="RNA_pol_Rpb1_3_sf"/>
</dbReference>
<dbReference type="InterPro" id="IPR007083">
    <property type="entry name" value="RNA_pol_Rpb1_4"/>
</dbReference>
<dbReference type="InterPro" id="IPR007081">
    <property type="entry name" value="RNA_pol_Rpb1_5"/>
</dbReference>
<dbReference type="InterPro" id="IPR044893">
    <property type="entry name" value="RNA_pol_Rpb1_clamp_domain"/>
</dbReference>
<dbReference type="InterPro" id="IPR038120">
    <property type="entry name" value="Rpb1_funnel_sf"/>
</dbReference>
<dbReference type="NCBIfam" id="TIGR02386">
    <property type="entry name" value="rpoC_TIGR"/>
    <property type="match status" value="1"/>
</dbReference>
<dbReference type="PANTHER" id="PTHR19376">
    <property type="entry name" value="DNA-DIRECTED RNA POLYMERASE"/>
    <property type="match status" value="1"/>
</dbReference>
<dbReference type="PANTHER" id="PTHR19376:SF54">
    <property type="entry name" value="DNA-DIRECTED RNA POLYMERASE SUBUNIT BETA"/>
    <property type="match status" value="1"/>
</dbReference>
<dbReference type="Pfam" id="PF04997">
    <property type="entry name" value="RNA_pol_Rpb1_1"/>
    <property type="match status" value="1"/>
</dbReference>
<dbReference type="Pfam" id="PF00623">
    <property type="entry name" value="RNA_pol_Rpb1_2"/>
    <property type="match status" value="2"/>
</dbReference>
<dbReference type="Pfam" id="PF04983">
    <property type="entry name" value="RNA_pol_Rpb1_3"/>
    <property type="match status" value="1"/>
</dbReference>
<dbReference type="Pfam" id="PF05000">
    <property type="entry name" value="RNA_pol_Rpb1_4"/>
    <property type="match status" value="1"/>
</dbReference>
<dbReference type="Pfam" id="PF04998">
    <property type="entry name" value="RNA_pol_Rpb1_5"/>
    <property type="match status" value="1"/>
</dbReference>
<dbReference type="SMART" id="SM00663">
    <property type="entry name" value="RPOLA_N"/>
    <property type="match status" value="1"/>
</dbReference>
<dbReference type="SUPFAM" id="SSF64484">
    <property type="entry name" value="beta and beta-prime subunits of DNA dependent RNA-polymerase"/>
    <property type="match status" value="1"/>
</dbReference>
<proteinExistence type="inferred from homology"/>
<protein>
    <recommendedName>
        <fullName evidence="1">DNA-directed RNA polymerase subunit beta'</fullName>
        <shortName evidence="1">RNAP subunit beta'</shortName>
        <ecNumber evidence="1">2.7.7.6</ecNumber>
    </recommendedName>
    <alternativeName>
        <fullName evidence="1">RNA polymerase subunit beta'</fullName>
    </alternativeName>
    <alternativeName>
        <fullName evidence="1">Transcriptase subunit beta'</fullName>
    </alternativeName>
</protein>
<comment type="function">
    <text evidence="1">DNA-dependent RNA polymerase catalyzes the transcription of DNA into RNA using the four ribonucleoside triphosphates as substrates.</text>
</comment>
<comment type="catalytic activity">
    <reaction evidence="1">
        <text>RNA(n) + a ribonucleoside 5'-triphosphate = RNA(n+1) + diphosphate</text>
        <dbReference type="Rhea" id="RHEA:21248"/>
        <dbReference type="Rhea" id="RHEA-COMP:14527"/>
        <dbReference type="Rhea" id="RHEA-COMP:17342"/>
        <dbReference type="ChEBI" id="CHEBI:33019"/>
        <dbReference type="ChEBI" id="CHEBI:61557"/>
        <dbReference type="ChEBI" id="CHEBI:140395"/>
        <dbReference type="EC" id="2.7.7.6"/>
    </reaction>
</comment>
<comment type="cofactor">
    <cofactor evidence="1">
        <name>Mg(2+)</name>
        <dbReference type="ChEBI" id="CHEBI:18420"/>
    </cofactor>
    <text evidence="1">Binds 1 Mg(2+) ion per subunit.</text>
</comment>
<comment type="cofactor">
    <cofactor evidence="1">
        <name>Zn(2+)</name>
        <dbReference type="ChEBI" id="CHEBI:29105"/>
    </cofactor>
    <text evidence="1">Binds 2 Zn(2+) ions per subunit.</text>
</comment>
<comment type="subunit">
    <text evidence="1">The RNAP catalytic core consists of 2 alpha, 1 beta, 1 beta' and 1 omega subunit. When a sigma factor is associated with the core the holoenzyme is formed, which can initiate transcription.</text>
</comment>
<comment type="similarity">
    <text evidence="1">Belongs to the RNA polymerase beta' chain family.</text>
</comment>